<proteinExistence type="inferred from homology"/>
<evidence type="ECO:0000250" key="1"/>
<evidence type="ECO:0000255" key="2">
    <source>
        <dbReference type="PROSITE-ProRule" id="PRU00251"/>
    </source>
</evidence>
<evidence type="ECO:0000255" key="3">
    <source>
        <dbReference type="PROSITE-ProRule" id="PRU00629"/>
    </source>
</evidence>
<evidence type="ECO:0000256" key="4">
    <source>
        <dbReference type="SAM" id="MobiDB-lite"/>
    </source>
</evidence>
<accession>P0DI14</accession>
<reference key="1">
    <citation type="submission" date="2008-09" db="EMBL/GenBank/DDBJ databases">
        <title>Shotgun sequence of a Brassica rapa BAC clone.</title>
        <authorList>
            <person name="Kwon S.J."/>
            <person name="Kim J.A."/>
            <person name="Mun J.H."/>
            <person name="Park T.H."/>
            <person name="Hong J.K."/>
            <person name="Kim J.S."/>
            <person name="Jin M."/>
            <person name="Lim M.H."/>
            <person name="Lee S.C."/>
            <person name="Seol Y.J."/>
            <person name="Lee S.I."/>
            <person name="Yang T.J."/>
            <person name="Park J.Y."/>
            <person name="Park B.S."/>
        </authorList>
    </citation>
    <scope>NUCLEOTIDE SEQUENCE [GENOMIC DNA]</scope>
    <source>
        <strain>cv. Chiifu</strain>
    </source>
</reference>
<dbReference type="EMBL" id="AC189458">
    <property type="status" value="NOT_ANNOTATED_CDS"/>
    <property type="molecule type" value="Genomic_DNA"/>
</dbReference>
<dbReference type="SMR" id="P0DI14"/>
<dbReference type="FunCoup" id="P0DI14">
    <property type="interactions" value="41"/>
</dbReference>
<dbReference type="STRING" id="51351.P0DI14"/>
<dbReference type="eggNOG" id="KOG0014">
    <property type="taxonomic scope" value="Eukaryota"/>
</dbReference>
<dbReference type="InParanoid" id="P0DI14"/>
<dbReference type="GO" id="GO:0005634">
    <property type="term" value="C:nucleus"/>
    <property type="evidence" value="ECO:0007669"/>
    <property type="project" value="UniProtKB-SubCell"/>
</dbReference>
<dbReference type="GO" id="GO:0003700">
    <property type="term" value="F:DNA-binding transcription factor activity"/>
    <property type="evidence" value="ECO:0007669"/>
    <property type="project" value="InterPro"/>
</dbReference>
<dbReference type="GO" id="GO:0046983">
    <property type="term" value="F:protein dimerization activity"/>
    <property type="evidence" value="ECO:0007669"/>
    <property type="project" value="InterPro"/>
</dbReference>
<dbReference type="GO" id="GO:0000977">
    <property type="term" value="F:RNA polymerase II transcription regulatory region sequence-specific DNA binding"/>
    <property type="evidence" value="ECO:0007669"/>
    <property type="project" value="InterPro"/>
</dbReference>
<dbReference type="GO" id="GO:0030154">
    <property type="term" value="P:cell differentiation"/>
    <property type="evidence" value="ECO:0007669"/>
    <property type="project" value="UniProtKB-KW"/>
</dbReference>
<dbReference type="GO" id="GO:0009908">
    <property type="term" value="P:flower development"/>
    <property type="evidence" value="ECO:0007669"/>
    <property type="project" value="UniProtKB-KW"/>
</dbReference>
<dbReference type="GO" id="GO:0045944">
    <property type="term" value="P:positive regulation of transcription by RNA polymerase II"/>
    <property type="evidence" value="ECO:0007669"/>
    <property type="project" value="InterPro"/>
</dbReference>
<dbReference type="CDD" id="cd00265">
    <property type="entry name" value="MADS_MEF2_like"/>
    <property type="match status" value="1"/>
</dbReference>
<dbReference type="FunFam" id="3.40.1810.10:FF:000003">
    <property type="entry name" value="MADS-box transcription factor MADS-MC"/>
    <property type="match status" value="1"/>
</dbReference>
<dbReference type="Gene3D" id="3.40.1810.10">
    <property type="entry name" value="Transcription factor, MADS-box"/>
    <property type="match status" value="1"/>
</dbReference>
<dbReference type="InterPro" id="IPR050142">
    <property type="entry name" value="MADS-box/MEF2_TF"/>
</dbReference>
<dbReference type="InterPro" id="IPR033896">
    <property type="entry name" value="MEF2-like_N"/>
</dbReference>
<dbReference type="InterPro" id="IPR002487">
    <property type="entry name" value="TF_Kbox"/>
</dbReference>
<dbReference type="InterPro" id="IPR002100">
    <property type="entry name" value="TF_MADSbox"/>
</dbReference>
<dbReference type="InterPro" id="IPR036879">
    <property type="entry name" value="TF_MADSbox_sf"/>
</dbReference>
<dbReference type="PANTHER" id="PTHR48019">
    <property type="entry name" value="SERUM RESPONSE FACTOR HOMOLOG"/>
    <property type="match status" value="1"/>
</dbReference>
<dbReference type="Pfam" id="PF01486">
    <property type="entry name" value="K-box"/>
    <property type="match status" value="1"/>
</dbReference>
<dbReference type="Pfam" id="PF00319">
    <property type="entry name" value="SRF-TF"/>
    <property type="match status" value="1"/>
</dbReference>
<dbReference type="PRINTS" id="PR00404">
    <property type="entry name" value="MADSDOMAIN"/>
</dbReference>
<dbReference type="SMART" id="SM00432">
    <property type="entry name" value="MADS"/>
    <property type="match status" value="1"/>
</dbReference>
<dbReference type="SUPFAM" id="SSF55455">
    <property type="entry name" value="SRF-like"/>
    <property type="match status" value="1"/>
</dbReference>
<dbReference type="PROSITE" id="PS51297">
    <property type="entry name" value="K_BOX"/>
    <property type="match status" value="1"/>
</dbReference>
<dbReference type="PROSITE" id="PS00350">
    <property type="entry name" value="MADS_BOX_1"/>
    <property type="match status" value="1"/>
</dbReference>
<dbReference type="PROSITE" id="PS50066">
    <property type="entry name" value="MADS_BOX_2"/>
    <property type="match status" value="1"/>
</dbReference>
<protein>
    <recommendedName>
        <fullName>Floral homeotic protein APETALA 1</fullName>
        <shortName>BcpAP1</shortName>
    </recommendedName>
    <alternativeName>
        <fullName>Agamous-like MADS-box protein AP1</fullName>
    </alternativeName>
</protein>
<gene>
    <name type="primary">AP1</name>
</gene>
<sequence>MGRGRVQLKRIENKINRQVTFSKRRAGLFKKAHEISVLCDAEVALVVFSHKGKLFEYSTDSCMEKILERYERYSYAERQLIAPESDVNTNWSMEYNRLKAKIELLERNQRHYLGEDLQAMSPKELQNLEQQLDTALKHIRSRKNQLMYDSVNELQRKEKAIQEQNSMLSKQIKEREKVLRAQQEQWDQQNHGQNMPPPPPPQEHQIQHPYMLSHQPSPFLNMGGLYEEEDPMAMRRNDLDLSLEPVYNCNLGCFAS</sequence>
<organism>
    <name type="scientific">Brassica rapa subsp. pekinensis</name>
    <name type="common">Chinese cabbage</name>
    <name type="synonym">Brassica pekinensis</name>
    <dbReference type="NCBI Taxonomy" id="51351"/>
    <lineage>
        <taxon>Eukaryota</taxon>
        <taxon>Viridiplantae</taxon>
        <taxon>Streptophyta</taxon>
        <taxon>Embryophyta</taxon>
        <taxon>Tracheophyta</taxon>
        <taxon>Spermatophyta</taxon>
        <taxon>Magnoliopsida</taxon>
        <taxon>eudicotyledons</taxon>
        <taxon>Gunneridae</taxon>
        <taxon>Pentapetalae</taxon>
        <taxon>rosids</taxon>
        <taxon>malvids</taxon>
        <taxon>Brassicales</taxon>
        <taxon>Brassicaceae</taxon>
        <taxon>Brassiceae</taxon>
        <taxon>Brassica</taxon>
    </lineage>
</organism>
<feature type="chain" id="PRO_0000417137" description="Floral homeotic protein APETALA 1">
    <location>
        <begin position="1"/>
        <end position="256"/>
    </location>
</feature>
<feature type="domain" description="MADS-box" evidence="2">
    <location>
        <begin position="1"/>
        <end position="61"/>
    </location>
</feature>
<feature type="domain" description="K-box" evidence="3">
    <location>
        <begin position="88"/>
        <end position="178"/>
    </location>
</feature>
<feature type="region of interest" description="Disordered" evidence="4">
    <location>
        <begin position="180"/>
        <end position="206"/>
    </location>
</feature>
<name>AP1_BRARP</name>
<keyword id="KW-0010">Activator</keyword>
<keyword id="KW-0175">Coiled coil</keyword>
<keyword id="KW-0217">Developmental protein</keyword>
<keyword id="KW-0221">Differentiation</keyword>
<keyword id="KW-0238">DNA-binding</keyword>
<keyword id="KW-0287">Flowering</keyword>
<keyword id="KW-0539">Nucleus</keyword>
<keyword id="KW-0804">Transcription</keyword>
<keyword id="KW-0805">Transcription regulation</keyword>
<comment type="function">
    <text evidence="1">Transcription factor that promotes early floral meristem identity in synergy with LEAFY. Displays a redundant function with CAULIFLOWER in the up-regulation of LEAFY. Required subsequently for the transition of an inflorescence meristem into a floral meristem, and for the normal development of sepals and petals in flowers. Regulates positively B class homeotic proteins (By similarity).</text>
</comment>
<comment type="subunit">
    <text evidence="1">Homodimer capable of binding to CArG-box sequences.</text>
</comment>
<comment type="subcellular location">
    <subcellularLocation>
        <location evidence="2">Nucleus</location>
    </subcellularLocation>
</comment>